<gene>
    <name evidence="1" type="primary">ilvC</name>
    <name type="ordered locus">Lferr_0894</name>
</gene>
<protein>
    <recommendedName>
        <fullName evidence="1">Ketol-acid reductoisomerase (NADP(+))</fullName>
        <shortName evidence="1">KARI</shortName>
        <ecNumber evidence="1">1.1.1.86</ecNumber>
    </recommendedName>
    <alternativeName>
        <fullName evidence="1">Acetohydroxy-acid isomeroreductase</fullName>
        <shortName evidence="1">AHIR</shortName>
    </alternativeName>
    <alternativeName>
        <fullName evidence="1">Alpha-keto-beta-hydroxylacyl reductoisomerase</fullName>
    </alternativeName>
    <alternativeName>
        <fullName evidence="1">Ketol-acid reductoisomerase type 1</fullName>
    </alternativeName>
    <alternativeName>
        <fullName evidence="1">Ketol-acid reductoisomerase type I</fullName>
    </alternativeName>
</protein>
<keyword id="KW-0028">Amino-acid biosynthesis</keyword>
<keyword id="KW-0100">Branched-chain amino acid biosynthesis</keyword>
<keyword id="KW-0460">Magnesium</keyword>
<keyword id="KW-0479">Metal-binding</keyword>
<keyword id="KW-0521">NADP</keyword>
<keyword id="KW-0560">Oxidoreductase</keyword>
<evidence type="ECO:0000255" key="1">
    <source>
        <dbReference type="HAMAP-Rule" id="MF_00435"/>
    </source>
</evidence>
<evidence type="ECO:0000255" key="2">
    <source>
        <dbReference type="PROSITE-ProRule" id="PRU01197"/>
    </source>
</evidence>
<evidence type="ECO:0000255" key="3">
    <source>
        <dbReference type="PROSITE-ProRule" id="PRU01198"/>
    </source>
</evidence>
<organism>
    <name type="scientific">Acidithiobacillus ferrooxidans (strain ATCC 53993 / BNL-5-31)</name>
    <name type="common">Leptospirillum ferrooxidans (ATCC 53993)</name>
    <dbReference type="NCBI Taxonomy" id="380394"/>
    <lineage>
        <taxon>Bacteria</taxon>
        <taxon>Pseudomonadati</taxon>
        <taxon>Pseudomonadota</taxon>
        <taxon>Acidithiobacillia</taxon>
        <taxon>Acidithiobacillales</taxon>
        <taxon>Acidithiobacillaceae</taxon>
        <taxon>Acidithiobacillus</taxon>
    </lineage>
</organism>
<accession>B5EP52</accession>
<comment type="function">
    <text evidence="1">Involved in the biosynthesis of branched-chain amino acids (BCAA). Catalyzes an alkyl-migration followed by a ketol-acid reduction of (S)-2-acetolactate (S2AL) to yield (R)-2,3-dihydroxy-isovalerate. In the isomerase reaction, S2AL is rearranged via a Mg-dependent methyl migration to produce 3-hydroxy-3-methyl-2-ketobutyrate (HMKB). In the reductase reaction, this 2-ketoacid undergoes a metal-dependent reduction by NADPH to yield (R)-2,3-dihydroxy-isovalerate.</text>
</comment>
<comment type="catalytic activity">
    <reaction evidence="1">
        <text>(2R)-2,3-dihydroxy-3-methylbutanoate + NADP(+) = (2S)-2-acetolactate + NADPH + H(+)</text>
        <dbReference type="Rhea" id="RHEA:22068"/>
        <dbReference type="ChEBI" id="CHEBI:15378"/>
        <dbReference type="ChEBI" id="CHEBI:49072"/>
        <dbReference type="ChEBI" id="CHEBI:57783"/>
        <dbReference type="ChEBI" id="CHEBI:58349"/>
        <dbReference type="ChEBI" id="CHEBI:58476"/>
        <dbReference type="EC" id="1.1.1.86"/>
    </reaction>
</comment>
<comment type="catalytic activity">
    <reaction evidence="1">
        <text>(2R,3R)-2,3-dihydroxy-3-methylpentanoate + NADP(+) = (S)-2-ethyl-2-hydroxy-3-oxobutanoate + NADPH + H(+)</text>
        <dbReference type="Rhea" id="RHEA:13493"/>
        <dbReference type="ChEBI" id="CHEBI:15378"/>
        <dbReference type="ChEBI" id="CHEBI:49256"/>
        <dbReference type="ChEBI" id="CHEBI:49258"/>
        <dbReference type="ChEBI" id="CHEBI:57783"/>
        <dbReference type="ChEBI" id="CHEBI:58349"/>
        <dbReference type="EC" id="1.1.1.86"/>
    </reaction>
</comment>
<comment type="cofactor">
    <cofactor evidence="1">
        <name>Mg(2+)</name>
        <dbReference type="ChEBI" id="CHEBI:18420"/>
    </cofactor>
    <text evidence="1">Binds 2 magnesium ions per subunit.</text>
</comment>
<comment type="pathway">
    <text evidence="1">Amino-acid biosynthesis; L-isoleucine biosynthesis; L-isoleucine from 2-oxobutanoate: step 2/4.</text>
</comment>
<comment type="pathway">
    <text evidence="1">Amino-acid biosynthesis; L-valine biosynthesis; L-valine from pyruvate: step 2/4.</text>
</comment>
<comment type="similarity">
    <text evidence="1">Belongs to the ketol-acid reductoisomerase family.</text>
</comment>
<proteinExistence type="inferred from homology"/>
<sequence length="338" mass="36416">MKVFYDNDADLALIQKKKVAIIGYGSQGHAHALNLKDSGVSVVVGLRKDSSSWEKAGKAGLEVKEVAAAVAAADVVMILTPDEGQGALYRDEIAPNIRQGAALVFAHGFNIHFGQIHPRADLDCFLVAPKGPGHLVRSTYTQGGGVPSLIAVHQDASGNATNIALSYAKANGGTRAGVIETSFREETETDLFGEQAVLCGGATALVQAGFETLVEAGYAPEMAYFECMHELKLIVDLMYEGGISNMRYSISNTAEYGDLTRGPRVVNADTKAEMKKILTEIQNGQFAREFILENQSGKPTMQAMRRIGAEHPIEVVGSKLRSMMTWIGQSRIVDRSRN</sequence>
<dbReference type="EC" id="1.1.1.86" evidence="1"/>
<dbReference type="EMBL" id="CP001132">
    <property type="protein sequence ID" value="ACH83143.1"/>
    <property type="molecule type" value="Genomic_DNA"/>
</dbReference>
<dbReference type="RefSeq" id="WP_012536329.1">
    <property type="nucleotide sequence ID" value="NC_011206.1"/>
</dbReference>
<dbReference type="SMR" id="B5EP52"/>
<dbReference type="GeneID" id="65280093"/>
<dbReference type="KEGG" id="afe:Lferr_0894"/>
<dbReference type="eggNOG" id="COG0059">
    <property type="taxonomic scope" value="Bacteria"/>
</dbReference>
<dbReference type="HOGENOM" id="CLU_033821_0_1_6"/>
<dbReference type="UniPathway" id="UPA00047">
    <property type="reaction ID" value="UER00056"/>
</dbReference>
<dbReference type="UniPathway" id="UPA00049">
    <property type="reaction ID" value="UER00060"/>
</dbReference>
<dbReference type="GO" id="GO:0005829">
    <property type="term" value="C:cytosol"/>
    <property type="evidence" value="ECO:0007669"/>
    <property type="project" value="TreeGrafter"/>
</dbReference>
<dbReference type="GO" id="GO:0004455">
    <property type="term" value="F:ketol-acid reductoisomerase activity"/>
    <property type="evidence" value="ECO:0007669"/>
    <property type="project" value="UniProtKB-UniRule"/>
</dbReference>
<dbReference type="GO" id="GO:0000287">
    <property type="term" value="F:magnesium ion binding"/>
    <property type="evidence" value="ECO:0007669"/>
    <property type="project" value="UniProtKB-UniRule"/>
</dbReference>
<dbReference type="GO" id="GO:0050661">
    <property type="term" value="F:NADP binding"/>
    <property type="evidence" value="ECO:0007669"/>
    <property type="project" value="InterPro"/>
</dbReference>
<dbReference type="GO" id="GO:0009097">
    <property type="term" value="P:isoleucine biosynthetic process"/>
    <property type="evidence" value="ECO:0007669"/>
    <property type="project" value="UniProtKB-UniRule"/>
</dbReference>
<dbReference type="GO" id="GO:0009099">
    <property type="term" value="P:L-valine biosynthetic process"/>
    <property type="evidence" value="ECO:0007669"/>
    <property type="project" value="UniProtKB-UniRule"/>
</dbReference>
<dbReference type="FunFam" id="3.40.50.720:FF:000023">
    <property type="entry name" value="Ketol-acid reductoisomerase (NADP(+))"/>
    <property type="match status" value="1"/>
</dbReference>
<dbReference type="Gene3D" id="6.10.240.10">
    <property type="match status" value="1"/>
</dbReference>
<dbReference type="Gene3D" id="3.40.50.720">
    <property type="entry name" value="NAD(P)-binding Rossmann-like Domain"/>
    <property type="match status" value="1"/>
</dbReference>
<dbReference type="HAMAP" id="MF_00435">
    <property type="entry name" value="IlvC"/>
    <property type="match status" value="1"/>
</dbReference>
<dbReference type="InterPro" id="IPR008927">
    <property type="entry name" value="6-PGluconate_DH-like_C_sf"/>
</dbReference>
<dbReference type="InterPro" id="IPR013023">
    <property type="entry name" value="KARI"/>
</dbReference>
<dbReference type="InterPro" id="IPR000506">
    <property type="entry name" value="KARI_C"/>
</dbReference>
<dbReference type="InterPro" id="IPR013116">
    <property type="entry name" value="KARI_N"/>
</dbReference>
<dbReference type="InterPro" id="IPR014359">
    <property type="entry name" value="KARI_prok"/>
</dbReference>
<dbReference type="InterPro" id="IPR036291">
    <property type="entry name" value="NAD(P)-bd_dom_sf"/>
</dbReference>
<dbReference type="NCBIfam" id="TIGR00465">
    <property type="entry name" value="ilvC"/>
    <property type="match status" value="1"/>
</dbReference>
<dbReference type="NCBIfam" id="NF004017">
    <property type="entry name" value="PRK05479.1"/>
    <property type="match status" value="1"/>
</dbReference>
<dbReference type="NCBIfam" id="NF009940">
    <property type="entry name" value="PRK13403.1"/>
    <property type="match status" value="1"/>
</dbReference>
<dbReference type="PANTHER" id="PTHR21371">
    <property type="entry name" value="KETOL-ACID REDUCTOISOMERASE, MITOCHONDRIAL"/>
    <property type="match status" value="1"/>
</dbReference>
<dbReference type="PANTHER" id="PTHR21371:SF1">
    <property type="entry name" value="KETOL-ACID REDUCTOISOMERASE, MITOCHONDRIAL"/>
    <property type="match status" value="1"/>
</dbReference>
<dbReference type="Pfam" id="PF01450">
    <property type="entry name" value="KARI_C"/>
    <property type="match status" value="1"/>
</dbReference>
<dbReference type="Pfam" id="PF07991">
    <property type="entry name" value="KARI_N"/>
    <property type="match status" value="1"/>
</dbReference>
<dbReference type="PIRSF" id="PIRSF000116">
    <property type="entry name" value="IlvC_gammaproteo"/>
    <property type="match status" value="1"/>
</dbReference>
<dbReference type="SUPFAM" id="SSF48179">
    <property type="entry name" value="6-phosphogluconate dehydrogenase C-terminal domain-like"/>
    <property type="match status" value="1"/>
</dbReference>
<dbReference type="SUPFAM" id="SSF51735">
    <property type="entry name" value="NAD(P)-binding Rossmann-fold domains"/>
    <property type="match status" value="1"/>
</dbReference>
<dbReference type="PROSITE" id="PS51851">
    <property type="entry name" value="KARI_C"/>
    <property type="match status" value="1"/>
</dbReference>
<dbReference type="PROSITE" id="PS51850">
    <property type="entry name" value="KARI_N"/>
    <property type="match status" value="1"/>
</dbReference>
<feature type="chain" id="PRO_1000124247" description="Ketol-acid reductoisomerase (NADP(+))">
    <location>
        <begin position="1"/>
        <end position="338"/>
    </location>
</feature>
<feature type="domain" description="KARI N-terminal Rossmann" evidence="2">
    <location>
        <begin position="1"/>
        <end position="181"/>
    </location>
</feature>
<feature type="domain" description="KARI C-terminal knotted" evidence="3">
    <location>
        <begin position="182"/>
        <end position="327"/>
    </location>
</feature>
<feature type="active site" evidence="1">
    <location>
        <position position="107"/>
    </location>
</feature>
<feature type="binding site" evidence="1">
    <location>
        <begin position="24"/>
        <end position="27"/>
    </location>
    <ligand>
        <name>NADP(+)</name>
        <dbReference type="ChEBI" id="CHEBI:58349"/>
    </ligand>
</feature>
<feature type="binding site" evidence="1">
    <location>
        <position position="47"/>
    </location>
    <ligand>
        <name>NADP(+)</name>
        <dbReference type="ChEBI" id="CHEBI:58349"/>
    </ligand>
</feature>
<feature type="binding site" evidence="1">
    <location>
        <position position="50"/>
    </location>
    <ligand>
        <name>NADP(+)</name>
        <dbReference type="ChEBI" id="CHEBI:58349"/>
    </ligand>
</feature>
<feature type="binding site" evidence="1">
    <location>
        <position position="52"/>
    </location>
    <ligand>
        <name>NADP(+)</name>
        <dbReference type="ChEBI" id="CHEBI:58349"/>
    </ligand>
</feature>
<feature type="binding site" evidence="1">
    <location>
        <begin position="82"/>
        <end position="85"/>
    </location>
    <ligand>
        <name>NADP(+)</name>
        <dbReference type="ChEBI" id="CHEBI:58349"/>
    </ligand>
</feature>
<feature type="binding site" evidence="1">
    <location>
        <position position="133"/>
    </location>
    <ligand>
        <name>NADP(+)</name>
        <dbReference type="ChEBI" id="CHEBI:58349"/>
    </ligand>
</feature>
<feature type="binding site" evidence="1">
    <location>
        <position position="190"/>
    </location>
    <ligand>
        <name>Mg(2+)</name>
        <dbReference type="ChEBI" id="CHEBI:18420"/>
        <label>1</label>
    </ligand>
</feature>
<feature type="binding site" evidence="1">
    <location>
        <position position="190"/>
    </location>
    <ligand>
        <name>Mg(2+)</name>
        <dbReference type="ChEBI" id="CHEBI:18420"/>
        <label>2</label>
    </ligand>
</feature>
<feature type="binding site" evidence="1">
    <location>
        <position position="194"/>
    </location>
    <ligand>
        <name>Mg(2+)</name>
        <dbReference type="ChEBI" id="CHEBI:18420"/>
        <label>1</label>
    </ligand>
</feature>
<feature type="binding site" evidence="1">
    <location>
        <position position="226"/>
    </location>
    <ligand>
        <name>Mg(2+)</name>
        <dbReference type="ChEBI" id="CHEBI:18420"/>
        <label>2</label>
    </ligand>
</feature>
<feature type="binding site" evidence="1">
    <location>
        <position position="230"/>
    </location>
    <ligand>
        <name>Mg(2+)</name>
        <dbReference type="ChEBI" id="CHEBI:18420"/>
        <label>2</label>
    </ligand>
</feature>
<feature type="binding site" evidence="1">
    <location>
        <position position="251"/>
    </location>
    <ligand>
        <name>substrate</name>
    </ligand>
</feature>
<reference key="1">
    <citation type="submission" date="2008-08" db="EMBL/GenBank/DDBJ databases">
        <title>Complete sequence of Acidithiobacillus ferrooxidans ATCC 53993.</title>
        <authorList>
            <person name="Lucas S."/>
            <person name="Copeland A."/>
            <person name="Lapidus A."/>
            <person name="Glavina del Rio T."/>
            <person name="Dalin E."/>
            <person name="Tice H."/>
            <person name="Bruce D."/>
            <person name="Goodwin L."/>
            <person name="Pitluck S."/>
            <person name="Sims D."/>
            <person name="Brettin T."/>
            <person name="Detter J.C."/>
            <person name="Han C."/>
            <person name="Kuske C.R."/>
            <person name="Larimer F."/>
            <person name="Land M."/>
            <person name="Hauser L."/>
            <person name="Kyrpides N."/>
            <person name="Lykidis A."/>
            <person name="Borole A.P."/>
        </authorList>
    </citation>
    <scope>NUCLEOTIDE SEQUENCE [LARGE SCALE GENOMIC DNA]</scope>
    <source>
        <strain>ATCC 53993 / BNL-5-31</strain>
    </source>
</reference>
<name>ILVC_ACIF5</name>